<sequence length="388" mass="42256">MQLTIIVLDSVGAGALPDAAAFGDAGAHTLNHTLKQAPVPLPHLARLGLGKLPTIDTSPETVPADAEVTGAYGRMREVSPGKDTSTGHWEFMGVQLEHPFQVFPDGFPPEVMDRFDAATGRGHLCNKPYSGTDVIRDYGEEHRRTGFPIVYTSADSVFQIAAHEDVVPLETLYEWCRAAREILQGEYAVARVIARPFRGEPPFERANEHRRDFSLTPPRTVLDALKEAGKDVVGIGKIPDIYAGQGFTESIHTDDNADGIRKTLERMKAGVDGLIFTNLVDTDAKFGHRRDPAGYSNALAEFDRALPDLIAALPEDGLLIILSDHGNDPTWHGTDHTREYGLLLAYGHGLSARDLGERETFADVGATVAEALGAQWDGPGTSFWNELR</sequence>
<dbReference type="EC" id="5.4.2.7" evidence="1"/>
<dbReference type="EMBL" id="AE000513">
    <property type="protein sequence ID" value="AAF11683.1"/>
    <property type="status" value="ALT_INIT"/>
    <property type="molecule type" value="Genomic_DNA"/>
</dbReference>
<dbReference type="PIR" id="D75310">
    <property type="entry name" value="D75310"/>
</dbReference>
<dbReference type="RefSeq" id="NP_295858.1">
    <property type="nucleotide sequence ID" value="NC_001263.1"/>
</dbReference>
<dbReference type="RefSeq" id="WP_027479937.1">
    <property type="nucleotide sequence ID" value="NC_001263.1"/>
</dbReference>
<dbReference type="SMR" id="Q9RSI9"/>
<dbReference type="FunCoup" id="Q9RSI9">
    <property type="interactions" value="68"/>
</dbReference>
<dbReference type="STRING" id="243230.DR_2135"/>
<dbReference type="PaxDb" id="243230-DR_2135"/>
<dbReference type="EnsemblBacteria" id="AAF11683">
    <property type="protein sequence ID" value="AAF11683"/>
    <property type="gene ID" value="DR_2135"/>
</dbReference>
<dbReference type="GeneID" id="69518376"/>
<dbReference type="KEGG" id="dra:DR_2135"/>
<dbReference type="PATRIC" id="fig|243230.17.peg.2358"/>
<dbReference type="eggNOG" id="COG1015">
    <property type="taxonomic scope" value="Bacteria"/>
</dbReference>
<dbReference type="HOGENOM" id="CLU_053861_0_0_0"/>
<dbReference type="InParanoid" id="Q9RSI9"/>
<dbReference type="OrthoDB" id="9769930at2"/>
<dbReference type="UniPathway" id="UPA00002">
    <property type="reaction ID" value="UER00467"/>
</dbReference>
<dbReference type="Proteomes" id="UP000002524">
    <property type="component" value="Chromosome 1"/>
</dbReference>
<dbReference type="GO" id="GO:0005829">
    <property type="term" value="C:cytosol"/>
    <property type="evidence" value="ECO:0000318"/>
    <property type="project" value="GO_Central"/>
</dbReference>
<dbReference type="GO" id="GO:0000287">
    <property type="term" value="F:magnesium ion binding"/>
    <property type="evidence" value="ECO:0007669"/>
    <property type="project" value="InterPro"/>
</dbReference>
<dbReference type="GO" id="GO:0030145">
    <property type="term" value="F:manganese ion binding"/>
    <property type="evidence" value="ECO:0007669"/>
    <property type="project" value="UniProtKB-UniRule"/>
</dbReference>
<dbReference type="GO" id="GO:0008973">
    <property type="term" value="F:phosphopentomutase activity"/>
    <property type="evidence" value="ECO:0000318"/>
    <property type="project" value="GO_Central"/>
</dbReference>
<dbReference type="GO" id="GO:0006018">
    <property type="term" value="P:2-deoxyribose 1-phosphate catabolic process"/>
    <property type="evidence" value="ECO:0007669"/>
    <property type="project" value="UniProtKB-UniRule"/>
</dbReference>
<dbReference type="GO" id="GO:0006015">
    <property type="term" value="P:5-phosphoribose 1-diphosphate biosynthetic process"/>
    <property type="evidence" value="ECO:0007669"/>
    <property type="project" value="UniProtKB-UniPathway"/>
</dbReference>
<dbReference type="GO" id="GO:0043094">
    <property type="term" value="P:metabolic compound salvage"/>
    <property type="evidence" value="ECO:0007669"/>
    <property type="project" value="InterPro"/>
</dbReference>
<dbReference type="GO" id="GO:0009117">
    <property type="term" value="P:nucleotide metabolic process"/>
    <property type="evidence" value="ECO:0007669"/>
    <property type="project" value="InterPro"/>
</dbReference>
<dbReference type="CDD" id="cd16009">
    <property type="entry name" value="PPM"/>
    <property type="match status" value="1"/>
</dbReference>
<dbReference type="FunFam" id="3.30.70.1250:FF:000001">
    <property type="entry name" value="Phosphopentomutase"/>
    <property type="match status" value="1"/>
</dbReference>
<dbReference type="Gene3D" id="3.40.720.10">
    <property type="entry name" value="Alkaline Phosphatase, subunit A"/>
    <property type="match status" value="1"/>
</dbReference>
<dbReference type="Gene3D" id="3.30.70.1250">
    <property type="entry name" value="Phosphopentomutase"/>
    <property type="match status" value="1"/>
</dbReference>
<dbReference type="HAMAP" id="MF_00740">
    <property type="entry name" value="Phosphopentomut"/>
    <property type="match status" value="1"/>
</dbReference>
<dbReference type="InterPro" id="IPR017850">
    <property type="entry name" value="Alkaline_phosphatase_core_sf"/>
</dbReference>
<dbReference type="InterPro" id="IPR010045">
    <property type="entry name" value="DeoB"/>
</dbReference>
<dbReference type="InterPro" id="IPR006124">
    <property type="entry name" value="Metalloenzyme"/>
</dbReference>
<dbReference type="InterPro" id="IPR024052">
    <property type="entry name" value="Phosphopentomutase_DeoB_cap_sf"/>
</dbReference>
<dbReference type="NCBIfam" id="TIGR01696">
    <property type="entry name" value="deoB"/>
    <property type="match status" value="1"/>
</dbReference>
<dbReference type="NCBIfam" id="NF003766">
    <property type="entry name" value="PRK05362.1"/>
    <property type="match status" value="1"/>
</dbReference>
<dbReference type="PANTHER" id="PTHR21110">
    <property type="entry name" value="PHOSPHOPENTOMUTASE"/>
    <property type="match status" value="1"/>
</dbReference>
<dbReference type="PANTHER" id="PTHR21110:SF0">
    <property type="entry name" value="PHOSPHOPENTOMUTASE"/>
    <property type="match status" value="1"/>
</dbReference>
<dbReference type="Pfam" id="PF01676">
    <property type="entry name" value="Metalloenzyme"/>
    <property type="match status" value="1"/>
</dbReference>
<dbReference type="PIRSF" id="PIRSF001491">
    <property type="entry name" value="Ppentomutase"/>
    <property type="match status" value="1"/>
</dbReference>
<dbReference type="SUPFAM" id="SSF53649">
    <property type="entry name" value="Alkaline phosphatase-like"/>
    <property type="match status" value="1"/>
</dbReference>
<dbReference type="SUPFAM" id="SSF143856">
    <property type="entry name" value="DeoB insert domain-like"/>
    <property type="match status" value="1"/>
</dbReference>
<comment type="function">
    <text evidence="1">Isomerase that catalyzes the conversion of deoxy-ribose 1-phosphate (dRib-1-P) and ribose 1-phosphate (Rib-1-P) to deoxy-ribose 5-phosphate (dRib-5-P) and ribose 5-phosphate (Rib-5-P), respectively.</text>
</comment>
<comment type="catalytic activity">
    <reaction evidence="1">
        <text>2-deoxy-alpha-D-ribose 1-phosphate = 2-deoxy-D-ribose 5-phosphate</text>
        <dbReference type="Rhea" id="RHEA:27658"/>
        <dbReference type="ChEBI" id="CHEBI:57259"/>
        <dbReference type="ChEBI" id="CHEBI:62877"/>
        <dbReference type="EC" id="5.4.2.7"/>
    </reaction>
</comment>
<comment type="catalytic activity">
    <reaction evidence="1">
        <text>alpha-D-ribose 1-phosphate = D-ribose 5-phosphate</text>
        <dbReference type="Rhea" id="RHEA:18793"/>
        <dbReference type="ChEBI" id="CHEBI:57720"/>
        <dbReference type="ChEBI" id="CHEBI:78346"/>
        <dbReference type="EC" id="5.4.2.7"/>
    </reaction>
</comment>
<comment type="cofactor">
    <cofactor evidence="1">
        <name>Mn(2+)</name>
        <dbReference type="ChEBI" id="CHEBI:29035"/>
    </cofactor>
    <text evidence="1">Binds 2 manganese ions.</text>
</comment>
<comment type="pathway">
    <text evidence="1">Carbohydrate degradation; 2-deoxy-D-ribose 1-phosphate degradation; D-glyceraldehyde 3-phosphate and acetaldehyde from 2-deoxy-alpha-D-ribose 1-phosphate: step 1/2.</text>
</comment>
<comment type="subcellular location">
    <subcellularLocation>
        <location evidence="1">Cytoplasm</location>
    </subcellularLocation>
</comment>
<comment type="similarity">
    <text evidence="1">Belongs to the phosphopentomutase family.</text>
</comment>
<comment type="sequence caution" evidence="2">
    <conflict type="erroneous initiation">
        <sequence resource="EMBL-CDS" id="AAF11683"/>
    </conflict>
</comment>
<accession>Q9RSI9</accession>
<name>DEOB_DEIRA</name>
<feature type="chain" id="PRO_0000199818" description="Phosphopentomutase">
    <location>
        <begin position="1"/>
        <end position="388"/>
    </location>
</feature>
<feature type="binding site" evidence="1">
    <location>
        <position position="9"/>
    </location>
    <ligand>
        <name>Mn(2+)</name>
        <dbReference type="ChEBI" id="CHEBI:29035"/>
        <label>1</label>
    </ligand>
</feature>
<feature type="binding site" evidence="1">
    <location>
        <position position="283"/>
    </location>
    <ligand>
        <name>Mn(2+)</name>
        <dbReference type="ChEBI" id="CHEBI:29035"/>
        <label>2</label>
    </ligand>
</feature>
<feature type="binding site" evidence="1">
    <location>
        <position position="288"/>
    </location>
    <ligand>
        <name>Mn(2+)</name>
        <dbReference type="ChEBI" id="CHEBI:29035"/>
        <label>2</label>
    </ligand>
</feature>
<feature type="binding site" evidence="1">
    <location>
        <position position="324"/>
    </location>
    <ligand>
        <name>Mn(2+)</name>
        <dbReference type="ChEBI" id="CHEBI:29035"/>
        <label>1</label>
    </ligand>
</feature>
<feature type="binding site" evidence="1">
    <location>
        <position position="325"/>
    </location>
    <ligand>
        <name>Mn(2+)</name>
        <dbReference type="ChEBI" id="CHEBI:29035"/>
        <label>1</label>
    </ligand>
</feature>
<feature type="binding site" evidence="1">
    <location>
        <position position="336"/>
    </location>
    <ligand>
        <name>Mn(2+)</name>
        <dbReference type="ChEBI" id="CHEBI:29035"/>
        <label>2</label>
    </ligand>
</feature>
<evidence type="ECO:0000255" key="1">
    <source>
        <dbReference type="HAMAP-Rule" id="MF_00740"/>
    </source>
</evidence>
<evidence type="ECO:0000305" key="2"/>
<keyword id="KW-0963">Cytoplasm</keyword>
<keyword id="KW-0413">Isomerase</keyword>
<keyword id="KW-0464">Manganese</keyword>
<keyword id="KW-0479">Metal-binding</keyword>
<keyword id="KW-1185">Reference proteome</keyword>
<proteinExistence type="inferred from homology"/>
<protein>
    <recommendedName>
        <fullName evidence="1">Phosphopentomutase</fullName>
        <ecNumber evidence="1">5.4.2.7</ecNumber>
    </recommendedName>
    <alternativeName>
        <fullName evidence="1">Phosphodeoxyribomutase</fullName>
    </alternativeName>
</protein>
<gene>
    <name evidence="1" type="primary">deoB</name>
    <name type="ordered locus">DR_2135</name>
</gene>
<reference key="1">
    <citation type="journal article" date="1999" name="Science">
        <title>Genome sequence of the radioresistant bacterium Deinococcus radiodurans R1.</title>
        <authorList>
            <person name="White O."/>
            <person name="Eisen J.A."/>
            <person name="Heidelberg J.F."/>
            <person name="Hickey E.K."/>
            <person name="Peterson J.D."/>
            <person name="Dodson R.J."/>
            <person name="Haft D.H."/>
            <person name="Gwinn M.L."/>
            <person name="Nelson W.C."/>
            <person name="Richardson D.L."/>
            <person name="Moffat K.S."/>
            <person name="Qin H."/>
            <person name="Jiang L."/>
            <person name="Pamphile W."/>
            <person name="Crosby M."/>
            <person name="Shen M."/>
            <person name="Vamathevan J.J."/>
            <person name="Lam P."/>
            <person name="McDonald L.A."/>
            <person name="Utterback T.R."/>
            <person name="Zalewski C."/>
            <person name="Makarova K.S."/>
            <person name="Aravind L."/>
            <person name="Daly M.J."/>
            <person name="Minton K.W."/>
            <person name="Fleischmann R.D."/>
            <person name="Ketchum K.A."/>
            <person name="Nelson K.E."/>
            <person name="Salzberg S.L."/>
            <person name="Smith H.O."/>
            <person name="Venter J.C."/>
            <person name="Fraser C.M."/>
        </authorList>
    </citation>
    <scope>NUCLEOTIDE SEQUENCE [LARGE SCALE GENOMIC DNA]</scope>
    <source>
        <strain>ATCC 13939 / DSM 20539 / JCM 16871 / CCUG 27074 / LMG 4051 / NBRC 15346 / NCIMB 9279 / VKM B-1422 / R1</strain>
    </source>
</reference>
<organism>
    <name type="scientific">Deinococcus radiodurans (strain ATCC 13939 / DSM 20539 / JCM 16871 / CCUG 27074 / LMG 4051 / NBRC 15346 / NCIMB 9279 / VKM B-1422 / R1)</name>
    <dbReference type="NCBI Taxonomy" id="243230"/>
    <lineage>
        <taxon>Bacteria</taxon>
        <taxon>Thermotogati</taxon>
        <taxon>Deinococcota</taxon>
        <taxon>Deinococci</taxon>
        <taxon>Deinococcales</taxon>
        <taxon>Deinococcaceae</taxon>
        <taxon>Deinococcus</taxon>
    </lineage>
</organism>